<evidence type="ECO:0000255" key="1">
    <source>
        <dbReference type="HAMAP-Rule" id="MF_00003"/>
    </source>
</evidence>
<protein>
    <recommendedName>
        <fullName evidence="1">Ribosome-binding factor A</fullName>
    </recommendedName>
</protein>
<name>RBFA_YERPG</name>
<proteinExistence type="inferred from homology"/>
<reference key="1">
    <citation type="journal article" date="2010" name="J. Bacteriol.">
        <title>Genome sequence of the deep-rooted Yersinia pestis strain Angola reveals new insights into the evolution and pangenome of the plague bacterium.</title>
        <authorList>
            <person name="Eppinger M."/>
            <person name="Worsham P.L."/>
            <person name="Nikolich M.P."/>
            <person name="Riley D.R."/>
            <person name="Sebastian Y."/>
            <person name="Mou S."/>
            <person name="Achtman M."/>
            <person name="Lindler L.E."/>
            <person name="Ravel J."/>
        </authorList>
    </citation>
    <scope>NUCLEOTIDE SEQUENCE [LARGE SCALE GENOMIC DNA]</scope>
    <source>
        <strain>Angola</strain>
    </source>
</reference>
<feature type="chain" id="PRO_1000088948" description="Ribosome-binding factor A">
    <location>
        <begin position="1"/>
        <end position="136"/>
    </location>
</feature>
<organism>
    <name type="scientific">Yersinia pestis bv. Antiqua (strain Angola)</name>
    <dbReference type="NCBI Taxonomy" id="349746"/>
    <lineage>
        <taxon>Bacteria</taxon>
        <taxon>Pseudomonadati</taxon>
        <taxon>Pseudomonadota</taxon>
        <taxon>Gammaproteobacteria</taxon>
        <taxon>Enterobacterales</taxon>
        <taxon>Yersiniaceae</taxon>
        <taxon>Yersinia</taxon>
    </lineage>
</organism>
<accession>A9R5A4</accession>
<comment type="function">
    <text evidence="1">One of several proteins that assist in the late maturation steps of the functional core of the 30S ribosomal subunit. Associates with free 30S ribosomal subunits (but not with 30S subunits that are part of 70S ribosomes or polysomes). Required for efficient processing of 16S rRNA. May interact with the 5'-terminal helix region of 16S rRNA.</text>
</comment>
<comment type="subunit">
    <text evidence="1">Monomer. Binds 30S ribosomal subunits, but not 50S ribosomal subunits or 70S ribosomes.</text>
</comment>
<comment type="subcellular location">
    <subcellularLocation>
        <location evidence="1">Cytoplasm</location>
    </subcellularLocation>
</comment>
<comment type="similarity">
    <text evidence="1">Belongs to the RbfA family.</text>
</comment>
<dbReference type="EMBL" id="CP000901">
    <property type="protein sequence ID" value="ABX85905.1"/>
    <property type="molecule type" value="Genomic_DNA"/>
</dbReference>
<dbReference type="RefSeq" id="WP_002209255.1">
    <property type="nucleotide sequence ID" value="NZ_CP009935.1"/>
</dbReference>
<dbReference type="SMR" id="A9R5A4"/>
<dbReference type="GeneID" id="96663988"/>
<dbReference type="KEGG" id="ypg:YpAngola_A3994"/>
<dbReference type="PATRIC" id="fig|349746.12.peg.718"/>
<dbReference type="GO" id="GO:0005829">
    <property type="term" value="C:cytosol"/>
    <property type="evidence" value="ECO:0007669"/>
    <property type="project" value="TreeGrafter"/>
</dbReference>
<dbReference type="GO" id="GO:0043024">
    <property type="term" value="F:ribosomal small subunit binding"/>
    <property type="evidence" value="ECO:0007669"/>
    <property type="project" value="TreeGrafter"/>
</dbReference>
<dbReference type="GO" id="GO:0030490">
    <property type="term" value="P:maturation of SSU-rRNA"/>
    <property type="evidence" value="ECO:0007669"/>
    <property type="project" value="UniProtKB-UniRule"/>
</dbReference>
<dbReference type="FunFam" id="3.30.300.20:FF:000007">
    <property type="entry name" value="Ribosome-binding factor A"/>
    <property type="match status" value="1"/>
</dbReference>
<dbReference type="Gene3D" id="3.30.300.20">
    <property type="match status" value="1"/>
</dbReference>
<dbReference type="HAMAP" id="MF_00003">
    <property type="entry name" value="RbfA"/>
    <property type="match status" value="1"/>
</dbReference>
<dbReference type="InterPro" id="IPR015946">
    <property type="entry name" value="KH_dom-like_a/b"/>
</dbReference>
<dbReference type="InterPro" id="IPR000238">
    <property type="entry name" value="RbfA"/>
</dbReference>
<dbReference type="InterPro" id="IPR023799">
    <property type="entry name" value="RbfA_dom_sf"/>
</dbReference>
<dbReference type="InterPro" id="IPR020053">
    <property type="entry name" value="Ribosome-bd_factorA_CS"/>
</dbReference>
<dbReference type="NCBIfam" id="TIGR00082">
    <property type="entry name" value="rbfA"/>
    <property type="match status" value="1"/>
</dbReference>
<dbReference type="PANTHER" id="PTHR33515">
    <property type="entry name" value="RIBOSOME-BINDING FACTOR A, CHLOROPLASTIC-RELATED"/>
    <property type="match status" value="1"/>
</dbReference>
<dbReference type="PANTHER" id="PTHR33515:SF1">
    <property type="entry name" value="RIBOSOME-BINDING FACTOR A, CHLOROPLASTIC-RELATED"/>
    <property type="match status" value="1"/>
</dbReference>
<dbReference type="Pfam" id="PF02033">
    <property type="entry name" value="RBFA"/>
    <property type="match status" value="1"/>
</dbReference>
<dbReference type="SUPFAM" id="SSF89919">
    <property type="entry name" value="Ribosome-binding factor A, RbfA"/>
    <property type="match status" value="1"/>
</dbReference>
<dbReference type="PROSITE" id="PS01319">
    <property type="entry name" value="RBFA"/>
    <property type="match status" value="1"/>
</dbReference>
<sequence>MAKEFSRSQRVSQEMQKEIALILQREIKDPRVGMATVSGIELSRDLAYAKVFVTFLNVLTDNADPDTVKNGIKALQDASGYIRTLLGKAMRLRIVPELTFAYDNSLIEGMRMSNLVSNVIKNDVERQVNPGSDEEK</sequence>
<keyword id="KW-0963">Cytoplasm</keyword>
<keyword id="KW-0690">Ribosome biogenesis</keyword>
<gene>
    <name evidence="1" type="primary">rbfA</name>
    <name type="ordered locus">YpAngola_A3994</name>
</gene>